<dbReference type="EMBL" id="AE006470">
    <property type="protein sequence ID" value="AAM72885.1"/>
    <property type="molecule type" value="Genomic_DNA"/>
</dbReference>
<dbReference type="RefSeq" id="NP_662543.1">
    <property type="nucleotide sequence ID" value="NC_002932.3"/>
</dbReference>
<dbReference type="RefSeq" id="WP_010933324.1">
    <property type="nucleotide sequence ID" value="NC_002932.3"/>
</dbReference>
<dbReference type="SMR" id="Q8KBX2"/>
<dbReference type="STRING" id="194439.CT1660"/>
<dbReference type="EnsemblBacteria" id="AAM72885">
    <property type="protein sequence ID" value="AAM72885"/>
    <property type="gene ID" value="CT1660"/>
</dbReference>
<dbReference type="KEGG" id="cte:CT1660"/>
<dbReference type="eggNOG" id="COG3476">
    <property type="taxonomic scope" value="Bacteria"/>
</dbReference>
<dbReference type="HOGENOM" id="CLU_091805_2_0_10"/>
<dbReference type="OrthoDB" id="9795496at2"/>
<dbReference type="Proteomes" id="UP000001007">
    <property type="component" value="Chromosome"/>
</dbReference>
<dbReference type="GO" id="GO:0016020">
    <property type="term" value="C:membrane"/>
    <property type="evidence" value="ECO:0000314"/>
    <property type="project" value="UniProtKB"/>
</dbReference>
<dbReference type="GO" id="GO:0005886">
    <property type="term" value="C:plasma membrane"/>
    <property type="evidence" value="ECO:0007669"/>
    <property type="project" value="UniProtKB-SubCell"/>
</dbReference>
<dbReference type="GO" id="GO:0046906">
    <property type="term" value="F:tetrapyrrole binding"/>
    <property type="evidence" value="ECO:0000314"/>
    <property type="project" value="UniProtKB"/>
</dbReference>
<dbReference type="GO" id="GO:0033013">
    <property type="term" value="P:tetrapyrrole metabolic process"/>
    <property type="evidence" value="ECO:0000314"/>
    <property type="project" value="UniProtKB"/>
</dbReference>
<dbReference type="CDD" id="cd15904">
    <property type="entry name" value="TSPO_MBR"/>
    <property type="match status" value="1"/>
</dbReference>
<dbReference type="FunFam" id="1.20.1260.100:FF:000001">
    <property type="entry name" value="translocator protein 2"/>
    <property type="match status" value="1"/>
</dbReference>
<dbReference type="Gene3D" id="1.20.1260.100">
    <property type="entry name" value="TspO/MBR protein"/>
    <property type="match status" value="1"/>
</dbReference>
<dbReference type="InterPro" id="IPR038330">
    <property type="entry name" value="TspO/MBR-related_sf"/>
</dbReference>
<dbReference type="InterPro" id="IPR004307">
    <property type="entry name" value="TspO_MBR"/>
</dbReference>
<dbReference type="PANTHER" id="PTHR10057">
    <property type="entry name" value="PERIPHERAL-TYPE BENZODIAZEPINE RECEPTOR"/>
    <property type="match status" value="1"/>
</dbReference>
<dbReference type="PANTHER" id="PTHR10057:SF0">
    <property type="entry name" value="TRANSLOCATOR PROTEIN"/>
    <property type="match status" value="1"/>
</dbReference>
<dbReference type="Pfam" id="PF03073">
    <property type="entry name" value="TspO_MBR"/>
    <property type="match status" value="1"/>
</dbReference>
<dbReference type="PIRSF" id="PIRSF005859">
    <property type="entry name" value="PBR"/>
    <property type="match status" value="1"/>
</dbReference>
<organism evidence="6">
    <name type="scientific">Chlorobaculum tepidum (strain ATCC 49652 / DSM 12025 / NBRC 103806 / TLS)</name>
    <name type="common">Chlorobium tepidum</name>
    <dbReference type="NCBI Taxonomy" id="194439"/>
    <lineage>
        <taxon>Bacteria</taxon>
        <taxon>Pseudomonadati</taxon>
        <taxon>Chlorobiota</taxon>
        <taxon>Chlorobiia</taxon>
        <taxon>Chlorobiales</taxon>
        <taxon>Chlorobiaceae</taxon>
        <taxon>Chlorobaculum</taxon>
    </lineage>
</organism>
<evidence type="ECO:0000250" key="1">
    <source>
        <dbReference type="UniProtKB" id="Q9RFC8"/>
    </source>
</evidence>
<evidence type="ECO:0000255" key="2"/>
<evidence type="ECO:0000269" key="3">
    <source>
    </source>
</evidence>
<evidence type="ECO:0000303" key="4">
    <source>
    </source>
</evidence>
<evidence type="ECO:0000305" key="5"/>
<evidence type="ECO:0000312" key="6">
    <source>
        <dbReference type="EMBL" id="AAM72885.1"/>
    </source>
</evidence>
<evidence type="ECO:0000312" key="7">
    <source>
        <dbReference type="Proteomes" id="UP000001007"/>
    </source>
</evidence>
<reference evidence="6 7" key="1">
    <citation type="journal article" date="2002" name="Proc. Natl. Acad. Sci. U.S.A.">
        <title>The complete genome sequence of Chlorobium tepidum TLS, a photosynthetic, anaerobic, green-sulfur bacterium.</title>
        <authorList>
            <person name="Eisen J.A."/>
            <person name="Nelson K.E."/>
            <person name="Paulsen I.T."/>
            <person name="Heidelberg J.F."/>
            <person name="Wu M."/>
            <person name="Dodson R.J."/>
            <person name="DeBoy R.T."/>
            <person name="Gwinn M.L."/>
            <person name="Nelson W.C."/>
            <person name="Haft D.H."/>
            <person name="Hickey E.K."/>
            <person name="Peterson J.D."/>
            <person name="Durkin A.S."/>
            <person name="Kolonay J.F."/>
            <person name="Yang F."/>
            <person name="Holt I.E."/>
            <person name="Umayam L.A."/>
            <person name="Mason T.M."/>
            <person name="Brenner M."/>
            <person name="Shea T.P."/>
            <person name="Parksey D.S."/>
            <person name="Nierman W.C."/>
            <person name="Feldblyum T.V."/>
            <person name="Hansen C.L."/>
            <person name="Craven M.B."/>
            <person name="Radune D."/>
            <person name="Vamathevan J.J."/>
            <person name="Khouri H.M."/>
            <person name="White O."/>
            <person name="Gruber T.M."/>
            <person name="Ketchum K.A."/>
            <person name="Venter J.C."/>
            <person name="Tettelin H."/>
            <person name="Bryant D.A."/>
            <person name="Fraser C.M."/>
        </authorList>
    </citation>
    <scope>NUCLEOTIDE SEQUENCE [LARGE SCALE GENOMIC DNA]</scope>
    <source>
        <strain evidence="7">ATCC 49652 / DSM 12025 / NBRC 103806 / TLS</strain>
    </source>
</reference>
<reference key="2">
    <citation type="journal article" date="2013" name="Biochemistry">
        <title>Chemical catalysis by the translocator protein (18 kDa).</title>
        <authorList>
            <person name="Ginter C."/>
            <person name="Kiburu I."/>
            <person name="Boudker O."/>
        </authorList>
    </citation>
    <scope>FUNCTION</scope>
    <scope>SUBCELLULAR LOCATION</scope>
    <scope>MUTAGENESIS OF TRP-142 AND ALA-146</scope>
</reference>
<name>TSPO_CHLTE</name>
<gene>
    <name evidence="6" type="primary">crtK-2</name>
    <name type="synonym">tspO</name>
    <name evidence="6" type="ordered locus">CT1660</name>
</gene>
<keyword id="KW-1003">Cell membrane</keyword>
<keyword id="KW-0472">Membrane</keyword>
<keyword id="KW-1185">Reference proteome</keyword>
<keyword id="KW-0812">Transmembrane</keyword>
<keyword id="KW-1133">Transmembrane helix</keyword>
<keyword id="KW-0813">Transport</keyword>
<sequence length="158" mass="17506">MNKQILTLALCIGLCLAVGFAGSTFTPKPASWYYTTLVKPSWNPPDWLFPPVWTILFIMMGTALAKVLGTGWKKNEVNVGVVLFAIQLMLNLGWSASFFGMQSPLAGLVDIVLLWIFIVLTMLAFARVSKPASLLLVPYLCWVSFASYLNFTILQLNP</sequence>
<feature type="chain" id="PRO_0000432575" description="Tryptophan-rich protein TspO">
    <location>
        <begin position="1"/>
        <end position="158"/>
    </location>
</feature>
<feature type="transmembrane region" description="Helical; Name=1" evidence="2">
    <location>
        <begin position="5"/>
        <end position="25"/>
    </location>
</feature>
<feature type="transmembrane region" description="Helical; Name=2" evidence="2">
    <location>
        <begin position="48"/>
        <end position="68"/>
    </location>
</feature>
<feature type="transmembrane region" description="Helical; Name=3" evidence="2">
    <location>
        <begin position="79"/>
        <end position="99"/>
    </location>
</feature>
<feature type="transmembrane region" description="Helical; Name=4" evidence="2">
    <location>
        <begin position="105"/>
        <end position="125"/>
    </location>
</feature>
<feature type="transmembrane region" description="Helical; Name=5" evidence="2">
    <location>
        <begin position="134"/>
        <end position="154"/>
    </location>
</feature>
<feature type="mutagenesis site" description="No effect on protoporphyrin IX binding. Nearly abolishes protoporphyrin IX photooxidation." evidence="3">
    <original>W</original>
    <variation>F</variation>
    <location>
        <position position="142"/>
    </location>
</feature>
<feature type="mutagenesis site" description="Decreases affinity for protoporphyrin IX. Nearly abolishes protoporphyrin IX photooxidation." evidence="3">
    <original>A</original>
    <variation>T</variation>
    <location>
        <position position="146"/>
    </location>
</feature>
<proteinExistence type="evidence at protein level"/>
<accession>Q8KBX2</accession>
<comment type="function">
    <text evidence="1 3">Binds tetrapyrroles and promotes the photooxidative degradation of protoporphyrin IX (PubMed:23651039). Can bind the benzodiazepine receptor agonist PK-11195 (in vitro); this interferes with photooxidative tetrapyrrole degradation (PubMed:23651039). May play a role in the transmembrane transport of tetrapyrroles and similar compounds (By similarity).</text>
</comment>
<comment type="subcellular location">
    <subcellularLocation>
        <location evidence="3">Membrane</location>
        <topology evidence="5">Multi-pass membrane protein</topology>
    </subcellularLocation>
    <subcellularLocation>
        <location evidence="5">Cell membrane</location>
        <topology evidence="5">Multi-pass membrane protein</topology>
    </subcellularLocation>
</comment>
<comment type="similarity">
    <text evidence="5">Belongs to the TspO/BZRP family.</text>
</comment>
<protein>
    <recommendedName>
        <fullName evidence="5">Tryptophan-rich protein TspO</fullName>
    </recommendedName>
    <alternativeName>
        <fullName evidence="4">Translocator protein TspO</fullName>
    </alternativeName>
</protein>